<proteinExistence type="evidence at protein level"/>
<sequence length="143" mass="15894">MSLSAKDKATVKLFWGKMSGKSELIGADALSRMLAVYPQTKIYFSHWKSCSPGSPEVKKHGKTIMMGIGEAVTKMDDLERGLLTLSELHAFKLRVDPTNFKLLSLNILVVMAIMFPLDFTPMAHLAVDKFLCALALALSEKYR</sequence>
<organism>
    <name type="scientific">Boreogadus saida</name>
    <name type="common">Polar cod</name>
    <name type="synonym">Gadus saida</name>
    <dbReference type="NCBI Taxonomy" id="44932"/>
    <lineage>
        <taxon>Eukaryota</taxon>
        <taxon>Metazoa</taxon>
        <taxon>Chordata</taxon>
        <taxon>Craniata</taxon>
        <taxon>Vertebrata</taxon>
        <taxon>Euteleostomi</taxon>
        <taxon>Actinopterygii</taxon>
        <taxon>Neopterygii</taxon>
        <taxon>Teleostei</taxon>
        <taxon>Neoteleostei</taxon>
        <taxon>Acanthomorphata</taxon>
        <taxon>Zeiogadaria</taxon>
        <taxon>Gadariae</taxon>
        <taxon>Gadiformes</taxon>
        <taxon>Gadoidei</taxon>
        <taxon>Gadidae</taxon>
        <taxon>Boreogadus</taxon>
    </lineage>
</organism>
<comment type="function">
    <text evidence="2 3">Involved in oxygen transport from gills to the various peripheral tissues.</text>
</comment>
<comment type="subunit">
    <text evidence="2">Hb 2 is a heterotetramer of two alpha-2 and two beta-1 chains. Hb 3 is a heterotetramer of two alpha-2 and two beta-2 chains.</text>
</comment>
<comment type="tissue specificity">
    <text evidence="3">Red blood cells.</text>
</comment>
<comment type="miscellaneous">
    <text>Hb 3 displays a Bohr effect, which is enhanced by organophosphates, and a Root effect, which is enhanced by ATP.</text>
</comment>
<comment type="similarity">
    <text evidence="1">Belongs to the globin family.</text>
</comment>
<protein>
    <recommendedName>
        <fullName>Hemoglobin subunit alpha-2</fullName>
    </recommendedName>
    <alternativeName>
        <fullName>Alpha-2-globin</fullName>
    </alternativeName>
    <alternativeName>
        <fullName>Hemoglobin alpha-2 chain</fullName>
    </alternativeName>
</protein>
<reference evidence="3 4" key="1">
    <citation type="journal article" date="2006" name="J. Biol. Chem.">
        <title>The oxygen transport system in three species of the boreal fish family Gadidae. Molecular phylogeny of hemoglobin.</title>
        <authorList>
            <person name="Verde C."/>
            <person name="Balestrieri M."/>
            <person name="de Pascale D."/>
            <person name="Pagnozzi D."/>
            <person name="Lecointre G."/>
            <person name="di Prisco G."/>
        </authorList>
    </citation>
    <scope>PROTEIN SEQUENCE OF 2-143</scope>
    <scope>NUCLEOTIDE SEQUENCE [MRNA] OF 12-143</scope>
    <scope>FUNCTION</scope>
    <scope>SUBUNIT</scope>
    <scope>ACETYLATION AT SER-2</scope>
    <source>
        <tissue evidence="2">Blood</tissue>
        <tissue evidence="2">Spleen</tissue>
    </source>
</reference>
<gene>
    <name type="primary">hba2</name>
</gene>
<evidence type="ECO:0000255" key="1">
    <source>
        <dbReference type="PROSITE-ProRule" id="PRU00238"/>
    </source>
</evidence>
<evidence type="ECO:0000269" key="2">
    <source>
    </source>
</evidence>
<evidence type="ECO:0000305" key="3"/>
<evidence type="ECO:0000312" key="4">
    <source>
        <dbReference type="EMBL" id="AAZ99823.1"/>
    </source>
</evidence>
<dbReference type="EMBL" id="DQ125471">
    <property type="protein sequence ID" value="AAZ99823.1"/>
    <property type="molecule type" value="mRNA"/>
</dbReference>
<dbReference type="SMR" id="Q1AGS8"/>
<dbReference type="iPTMnet" id="Q1AGS8"/>
<dbReference type="GO" id="GO:0072562">
    <property type="term" value="C:blood microparticle"/>
    <property type="evidence" value="ECO:0007669"/>
    <property type="project" value="TreeGrafter"/>
</dbReference>
<dbReference type="GO" id="GO:0031838">
    <property type="term" value="C:haptoglobin-hemoglobin complex"/>
    <property type="evidence" value="ECO:0007669"/>
    <property type="project" value="TreeGrafter"/>
</dbReference>
<dbReference type="GO" id="GO:0005833">
    <property type="term" value="C:hemoglobin complex"/>
    <property type="evidence" value="ECO:0007669"/>
    <property type="project" value="InterPro"/>
</dbReference>
<dbReference type="GO" id="GO:0031720">
    <property type="term" value="F:haptoglobin binding"/>
    <property type="evidence" value="ECO:0007669"/>
    <property type="project" value="TreeGrafter"/>
</dbReference>
<dbReference type="GO" id="GO:0020037">
    <property type="term" value="F:heme binding"/>
    <property type="evidence" value="ECO:0007669"/>
    <property type="project" value="InterPro"/>
</dbReference>
<dbReference type="GO" id="GO:0046872">
    <property type="term" value="F:metal ion binding"/>
    <property type="evidence" value="ECO:0007669"/>
    <property type="project" value="UniProtKB-KW"/>
</dbReference>
<dbReference type="GO" id="GO:0043177">
    <property type="term" value="F:organic acid binding"/>
    <property type="evidence" value="ECO:0007669"/>
    <property type="project" value="TreeGrafter"/>
</dbReference>
<dbReference type="GO" id="GO:0019825">
    <property type="term" value="F:oxygen binding"/>
    <property type="evidence" value="ECO:0007669"/>
    <property type="project" value="InterPro"/>
</dbReference>
<dbReference type="GO" id="GO:0005344">
    <property type="term" value="F:oxygen carrier activity"/>
    <property type="evidence" value="ECO:0007669"/>
    <property type="project" value="UniProtKB-KW"/>
</dbReference>
<dbReference type="GO" id="GO:0004601">
    <property type="term" value="F:peroxidase activity"/>
    <property type="evidence" value="ECO:0007669"/>
    <property type="project" value="TreeGrafter"/>
</dbReference>
<dbReference type="GO" id="GO:0042744">
    <property type="term" value="P:hydrogen peroxide catabolic process"/>
    <property type="evidence" value="ECO:0007669"/>
    <property type="project" value="TreeGrafter"/>
</dbReference>
<dbReference type="CDD" id="cd08927">
    <property type="entry name" value="Hb-alpha-like"/>
    <property type="match status" value="1"/>
</dbReference>
<dbReference type="FunFam" id="1.10.490.10:FF:000002">
    <property type="entry name" value="Hemoglobin subunit alpha"/>
    <property type="match status" value="1"/>
</dbReference>
<dbReference type="Gene3D" id="1.10.490.10">
    <property type="entry name" value="Globins"/>
    <property type="match status" value="1"/>
</dbReference>
<dbReference type="InterPro" id="IPR000971">
    <property type="entry name" value="Globin"/>
</dbReference>
<dbReference type="InterPro" id="IPR009050">
    <property type="entry name" value="Globin-like_sf"/>
</dbReference>
<dbReference type="InterPro" id="IPR012292">
    <property type="entry name" value="Globin/Proto"/>
</dbReference>
<dbReference type="InterPro" id="IPR002338">
    <property type="entry name" value="Hemoglobin_a-typ"/>
</dbReference>
<dbReference type="InterPro" id="IPR050056">
    <property type="entry name" value="Hemoglobin_oxygen_transport"/>
</dbReference>
<dbReference type="PANTHER" id="PTHR11442">
    <property type="entry name" value="HEMOGLOBIN FAMILY MEMBER"/>
    <property type="match status" value="1"/>
</dbReference>
<dbReference type="PANTHER" id="PTHR11442:SF41">
    <property type="entry name" value="HEMOGLOBIN SUBUNIT ZETA"/>
    <property type="match status" value="1"/>
</dbReference>
<dbReference type="Pfam" id="PF00042">
    <property type="entry name" value="Globin"/>
    <property type="match status" value="1"/>
</dbReference>
<dbReference type="PRINTS" id="PR00612">
    <property type="entry name" value="ALPHAHAEM"/>
</dbReference>
<dbReference type="SUPFAM" id="SSF46458">
    <property type="entry name" value="Globin-like"/>
    <property type="match status" value="1"/>
</dbReference>
<dbReference type="PROSITE" id="PS01033">
    <property type="entry name" value="GLOBIN"/>
    <property type="match status" value="1"/>
</dbReference>
<feature type="initiator methionine" description="Removed" evidence="2">
    <location>
        <position position="1"/>
    </location>
</feature>
<feature type="chain" id="PRO_0000247578" description="Hemoglobin subunit alpha-2">
    <location>
        <begin position="2"/>
        <end position="143"/>
    </location>
</feature>
<feature type="domain" description="Globin" evidence="1">
    <location>
        <begin position="2"/>
        <end position="143"/>
    </location>
</feature>
<feature type="binding site" evidence="1">
    <location>
        <position position="60"/>
    </location>
    <ligand>
        <name>O2</name>
        <dbReference type="ChEBI" id="CHEBI:15379"/>
    </ligand>
</feature>
<feature type="binding site" description="proximal binding residue" evidence="1">
    <location>
        <position position="89"/>
    </location>
    <ligand>
        <name>heme b</name>
        <dbReference type="ChEBI" id="CHEBI:60344"/>
    </ligand>
    <ligandPart>
        <name>Fe</name>
        <dbReference type="ChEBI" id="CHEBI:18248"/>
    </ligandPart>
</feature>
<feature type="modified residue" description="N-acetylserine" evidence="2">
    <location>
        <position position="2"/>
    </location>
</feature>
<name>HBA2_BORSA</name>
<accession>Q1AGS8</accession>
<accession>P84606</accession>
<keyword id="KW-0007">Acetylation</keyword>
<keyword id="KW-0903">Direct protein sequencing</keyword>
<keyword id="KW-0349">Heme</keyword>
<keyword id="KW-0408">Iron</keyword>
<keyword id="KW-0479">Metal-binding</keyword>
<keyword id="KW-0561">Oxygen transport</keyword>
<keyword id="KW-0813">Transport</keyword>